<reference key="1">
    <citation type="journal article" date="1997" name="Nature">
        <title>The nucleotide sequence of Saccharomyces cerevisiae chromosome XIV and its evolutionary implications.</title>
        <authorList>
            <person name="Philippsen P."/>
            <person name="Kleine K."/>
            <person name="Poehlmann R."/>
            <person name="Duesterhoeft A."/>
            <person name="Hamberg K."/>
            <person name="Hegemann J.H."/>
            <person name="Obermaier B."/>
            <person name="Urrestarazu L.A."/>
            <person name="Aert R."/>
            <person name="Albermann K."/>
            <person name="Altmann R."/>
            <person name="Andre B."/>
            <person name="Baladron V."/>
            <person name="Ballesta J.P.G."/>
            <person name="Becam A.-M."/>
            <person name="Beinhauer J.D."/>
            <person name="Boskovic J."/>
            <person name="Buitrago M.J."/>
            <person name="Bussereau F."/>
            <person name="Coster F."/>
            <person name="Crouzet M."/>
            <person name="D'Angelo M."/>
            <person name="Dal Pero F."/>
            <person name="De Antoni A."/>
            <person name="del Rey F."/>
            <person name="Doignon F."/>
            <person name="Domdey H."/>
            <person name="Dubois E."/>
            <person name="Fiedler T.A."/>
            <person name="Fleig U."/>
            <person name="Floeth M."/>
            <person name="Fritz C."/>
            <person name="Gaillardin C."/>
            <person name="Garcia-Cantalejo J.M."/>
            <person name="Glansdorff N."/>
            <person name="Goffeau A."/>
            <person name="Gueldener U."/>
            <person name="Herbert C.J."/>
            <person name="Heumann K."/>
            <person name="Heuss-Neitzel D."/>
            <person name="Hilbert H."/>
            <person name="Hinni K."/>
            <person name="Iraqui Houssaini I."/>
            <person name="Jacquet M."/>
            <person name="Jimenez A."/>
            <person name="Jonniaux J.-L."/>
            <person name="Karpfinger-Hartl L."/>
            <person name="Lanfranchi G."/>
            <person name="Lepingle A."/>
            <person name="Levesque H."/>
            <person name="Lyck R."/>
            <person name="Maftahi M."/>
            <person name="Mallet L."/>
            <person name="Maurer C.T.C."/>
            <person name="Messenguy F."/>
            <person name="Mewes H.-W."/>
            <person name="Moestl D."/>
            <person name="Nasr F."/>
            <person name="Nicaud J.-M."/>
            <person name="Niedenthal R.K."/>
            <person name="Pandolfo D."/>
            <person name="Pierard A."/>
            <person name="Piravandi E."/>
            <person name="Planta R.J."/>
            <person name="Pohl T.M."/>
            <person name="Purnelle B."/>
            <person name="Rebischung C."/>
            <person name="Remacha M.A."/>
            <person name="Revuelta J.L."/>
            <person name="Rinke M."/>
            <person name="Saiz J.E."/>
            <person name="Sartorello F."/>
            <person name="Scherens B."/>
            <person name="Sen-Gupta M."/>
            <person name="Soler-Mira A."/>
            <person name="Urbanus J.H.M."/>
            <person name="Valle G."/>
            <person name="Van Dyck L."/>
            <person name="Verhasselt P."/>
            <person name="Vierendeels F."/>
            <person name="Vissers S."/>
            <person name="Voet M."/>
            <person name="Volckaert G."/>
            <person name="Wach A."/>
            <person name="Wambutt R."/>
            <person name="Wedler H."/>
            <person name="Zollner A."/>
            <person name="Hani J."/>
        </authorList>
    </citation>
    <scope>NUCLEOTIDE SEQUENCE [LARGE SCALE GENOMIC DNA]</scope>
    <source>
        <strain>ATCC 204508 / S288c</strain>
    </source>
</reference>
<reference key="2">
    <citation type="journal article" date="2014" name="G3 (Bethesda)">
        <title>The reference genome sequence of Saccharomyces cerevisiae: Then and now.</title>
        <authorList>
            <person name="Engel S.R."/>
            <person name="Dietrich F.S."/>
            <person name="Fisk D.G."/>
            <person name="Binkley G."/>
            <person name="Balakrishnan R."/>
            <person name="Costanzo M.C."/>
            <person name="Dwight S.S."/>
            <person name="Hitz B.C."/>
            <person name="Karra K."/>
            <person name="Nash R.S."/>
            <person name="Weng S."/>
            <person name="Wong E.D."/>
            <person name="Lloyd P."/>
            <person name="Skrzypek M.S."/>
            <person name="Miyasato S.R."/>
            <person name="Simison M."/>
            <person name="Cherry J.M."/>
        </authorList>
    </citation>
    <scope>GENOME REANNOTATION</scope>
    <source>
        <strain>ATCC 204508 / S288c</strain>
    </source>
</reference>
<reference key="3">
    <citation type="journal article" date="1998" name="J. Biol. Chem.">
        <title>Y'-Help1, a DNA helicase encoded by the yeast subtelomeric Y' element, is induced in survivors defective for telomerase.</title>
        <authorList>
            <person name="Yamada M."/>
            <person name="Hayatsu N."/>
            <person name="Matsuura A."/>
            <person name="Ishikawa F."/>
        </authorList>
    </citation>
    <scope>FUNCTION</scope>
    <scope>INDUCTION</scope>
</reference>
<gene>
    <name type="primary">YRF1-6</name>
    <name type="ordered locus">YNL339C</name>
    <name type="ORF">N0152</name>
</gene>
<proteinExistence type="evidence at transcript level"/>
<keyword id="KW-0067">ATP-binding</keyword>
<keyword id="KW-0347">Helicase</keyword>
<keyword id="KW-0378">Hydrolase</keyword>
<keyword id="KW-0413">Isomerase</keyword>
<keyword id="KW-0547">Nucleotide-binding</keyword>
<keyword id="KW-1185">Reference proteome</keyword>
<keyword id="KW-0677">Repeat</keyword>
<sequence>MEIENEQICTCIAQILHLLNSLIITFLDDDKTETGQSFVYIDGFLVKKHNNQHTIVNFETYKNKMKVSDRRKFEKANFDEFESALNNKNDLVHCPSITLFESIPTEVRSFYEDEKSGLIKVVKFRTGAMDRKRSFEKIVVSVMVGKNVQKFLTFVEDEPDFQGGPIPSKYLIPKKINLMVYTLFQVHTLKFNRKDYDTLSLFYLNRGYYNELSFRVLERCYEIASARPNDSSTMRTFTDFVSGTPIVRGLQKSTIRKYGYNLAPYMFLLLHVDELSIFSAYQASLPGEKKVDTERLKRDLCPRKPTEIKYFSQICNDMMNKKDRLGDILHIILRACALNFGAGPRGGAGDEEDRSITNEEPIIPSVDEHGLKVCKLRSPNTPRRLRKTLDAVKALLVSSCACTARDLDIFDDNNGVAMWKWIKILYHEVAQETALKDSYRITLVPSSDGVSVCGKLFNREYVRGFYFACKAQFDNLWEELNDCFYMPTVVDIASLILRNREVLFREPKRGIDEYLENDSFLQMIPVKYREIVLPKLRRDTNKMTAALKNKVTVAIDELTVPLMWMIHFAVGYPYRYPELQLLAFAGPQRNVYVDDTTRRIQLYTDYNKNGSSEPRLKTLDGLTSDYVFYFVTVLRQMQICALGNSYDAFNHDPWMDVVGFEDPDQVTNRDISRIVLYSYMFLNTAKGCLVEYATFRQYMRELPKNAPQKLNFREMRQGLIALGRHCVGSRFETDLYESATSELMANHSVQTGRNIYGVDSFSLTSVSGTTATLLQERASERWIQWLGLESDYHCSFSSTRNAEDVVAGEAASSDHHQKISRVTRKRPREPKSTNDILVAGQKLFGSSFEFRDLHQLRLCHEIYMADTPSVAVQAPPGYGKTELFHLPLIALASKGDVKYVSFLFVPYTVLLANCMIRLSRCGCLNVAPVRNFIEEGCDGVTDLYVGIYDDLASTNFTDRIAAWENIVECTFRTNNVKLGYLIVDEFHNFETEVYRQSQFGGITNLDFDAFEKAIFLSGTAPEAVADAALQRIGLTGLAKKSMDINELKRSEDLSRGLSSYPTRMFNLIKEKSEVPLGHVHKIWKKVESQPEEALKLLLALFEIEPESKAIVVASTTNEVEELACSWRKYFRVVWIHGKLGAAEKVSRTKEFVTDGSMRVLIGTKLVTEGIDIKQLMMVIMLDNRLNIIELIQGVGRLRDGGLCYLLSRKNSWAARNRKGELPPIKEGCITEQVREFYGLESKKGKKGQHVGCCGSRTDLSADTVELIERMDRLAEKQATASMSIVALPSSFQESNSSDRCRKYCSSDEDSDTCIHGSANASTNATTNSSTNATTTASTNVRTSATTTASINVRTSATTTESTNSSTNATTTASTNVRTSATTTASINVRTSATTTESTNSNTSATTTESTDSNTSATTTESTDSNTSATTTASTNSSTNATTTASTNSSTNATTTESTNASAKEDANKDGNAEDNRFHPVTDINKESYKRKGSQMVLLERKKLKAQFPNTSENMNVLQFLGFRSDEIKHLFLYGIDVYFCPEGVFTQYGLCKGCQKMFELCVCWAGQKVSYRRMAWEALAVERMLRNDEEYKEYLEDIEPYHGDPVGYLKFFSVKRGEIYSQIQRNYAWYLAITRRRETISVLDSTRGKQGSQVFRMSGRQIKELYYKVWSNLRESKTEVLQYFLNWDEKKCREEWEAKDDTVFVEALEKVGVFQRLRSMTSAGLQGPQYVKLQFSRHHRQLRSRYELSLGMHLRDQLALGVTPSKVPHWTAFLSMLIGLFCNKTFRQKLEYLLEQISEVWLLPHWLDLANVEVLAADNTRVPLYMLMVAVHKELDSDDVPDGRFDILLCRDSSREVGE</sequence>
<comment type="function">
    <text evidence="5">Catalyzes DNA unwinding and is involved in telomerase-independent telomere maintenance.</text>
</comment>
<comment type="induction">
    <text evidence="5">Induced in absence of telomerase TLC1.</text>
</comment>
<comment type="similarity">
    <text evidence="4">Belongs to the helicase family. Yeast subtelomeric Y' repeat subfamily.</text>
</comment>
<dbReference type="EC" id="5.6.2.-" evidence="5"/>
<dbReference type="EMBL" id="Z71615">
    <property type="protein sequence ID" value="CAA96276.1"/>
    <property type="molecule type" value="Genomic_DNA"/>
</dbReference>
<dbReference type="EMBL" id="Z71614">
    <property type="protein sequence ID" value="CAA96275.1"/>
    <property type="molecule type" value="Genomic_DNA"/>
</dbReference>
<dbReference type="EMBL" id="BK006947">
    <property type="protein sequence ID" value="DAA10226.1"/>
    <property type="molecule type" value="Genomic_DNA"/>
</dbReference>
<dbReference type="PIR" id="S63325">
    <property type="entry name" value="S63325"/>
</dbReference>
<dbReference type="RefSeq" id="NP_014060.1">
    <property type="nucleotide sequence ID" value="NM_001183177.1"/>
</dbReference>
<dbReference type="BioGRID" id="35504">
    <property type="interactions" value="47"/>
</dbReference>
<dbReference type="DIP" id="DIP-7312N"/>
<dbReference type="FunCoup" id="P53819">
    <property type="interactions" value="85"/>
</dbReference>
<dbReference type="IntAct" id="P53819">
    <property type="interactions" value="2"/>
</dbReference>
<dbReference type="MINT" id="P53819"/>
<dbReference type="STRING" id="4932.YNL339C"/>
<dbReference type="PaxDb" id="4932-YNL339C"/>
<dbReference type="EnsemblFungi" id="YNL339C_mRNA">
    <property type="protein sequence ID" value="YNL339C"/>
    <property type="gene ID" value="YNL339C"/>
</dbReference>
<dbReference type="GeneID" id="855377"/>
<dbReference type="KEGG" id="sce:YNL339C"/>
<dbReference type="AGR" id="SGD:S000005283"/>
<dbReference type="SGD" id="S000005283">
    <property type="gene designation" value="YRF1-6"/>
</dbReference>
<dbReference type="VEuPathDB" id="FungiDB:YNL339C"/>
<dbReference type="GeneTree" id="ENSGT00940000153173"/>
<dbReference type="HOGENOM" id="CLU_003044_2_0_1"/>
<dbReference type="InParanoid" id="P53819"/>
<dbReference type="OMA" id="GLANIGH"/>
<dbReference type="OrthoDB" id="4070089at2759"/>
<dbReference type="BioCyc" id="YEAST:G3O-33320-MONOMER"/>
<dbReference type="Reactome" id="R-SCE-5689880">
    <property type="pathway name" value="Ub-specific processing proteases"/>
</dbReference>
<dbReference type="PRO" id="PR:P53819"/>
<dbReference type="Proteomes" id="UP000002311">
    <property type="component" value="Chromosome XIV"/>
</dbReference>
<dbReference type="RNAct" id="P53819">
    <property type="molecule type" value="protein"/>
</dbReference>
<dbReference type="GO" id="GO:0005737">
    <property type="term" value="C:cytoplasm"/>
    <property type="evidence" value="ECO:0000318"/>
    <property type="project" value="GO_Central"/>
</dbReference>
<dbReference type="GO" id="GO:0005634">
    <property type="term" value="C:nucleus"/>
    <property type="evidence" value="ECO:0000305"/>
    <property type="project" value="SGD"/>
</dbReference>
<dbReference type="GO" id="GO:0005524">
    <property type="term" value="F:ATP binding"/>
    <property type="evidence" value="ECO:0007669"/>
    <property type="project" value="UniProtKB-KW"/>
</dbReference>
<dbReference type="GO" id="GO:0016887">
    <property type="term" value="F:ATP hydrolysis activity"/>
    <property type="evidence" value="ECO:0007669"/>
    <property type="project" value="RHEA"/>
</dbReference>
<dbReference type="GO" id="GO:0003678">
    <property type="term" value="F:DNA helicase activity"/>
    <property type="evidence" value="ECO:0000250"/>
    <property type="project" value="SGD"/>
</dbReference>
<dbReference type="GO" id="GO:0003676">
    <property type="term" value="F:nucleic acid binding"/>
    <property type="evidence" value="ECO:0007669"/>
    <property type="project" value="InterPro"/>
</dbReference>
<dbReference type="GO" id="GO:0000722">
    <property type="term" value="P:telomere maintenance via recombination"/>
    <property type="evidence" value="ECO:0000316"/>
    <property type="project" value="SGD"/>
</dbReference>
<dbReference type="FunFam" id="3.40.50.300:FF:001914">
    <property type="entry name" value="YML133C-like protein"/>
    <property type="match status" value="1"/>
</dbReference>
<dbReference type="FunFam" id="3.40.50.300:FF:002410">
    <property type="entry name" value="YML133C-like protein"/>
    <property type="match status" value="1"/>
</dbReference>
<dbReference type="Gene3D" id="3.40.50.300">
    <property type="entry name" value="P-loop containing nucleotide triphosphate hydrolases"/>
    <property type="match status" value="1"/>
</dbReference>
<dbReference type="InterPro" id="IPR011545">
    <property type="entry name" value="DEAD/DEAH_box_helicase_dom"/>
</dbReference>
<dbReference type="InterPro" id="IPR014001">
    <property type="entry name" value="Helicase_ATP-bd"/>
</dbReference>
<dbReference type="InterPro" id="IPR001650">
    <property type="entry name" value="Helicase_C-like"/>
</dbReference>
<dbReference type="InterPro" id="IPR037240">
    <property type="entry name" value="ORC1-binding_dom"/>
</dbReference>
<dbReference type="InterPro" id="IPR027417">
    <property type="entry name" value="P-loop_NTPase"/>
</dbReference>
<dbReference type="InterPro" id="IPR021646">
    <property type="entry name" value="Sir1_ORC-binding"/>
</dbReference>
<dbReference type="InterPro" id="IPR050978">
    <property type="entry name" value="Y'_ATP-dependent_helicase"/>
</dbReference>
<dbReference type="PANTHER" id="PTHR31583">
    <property type="match status" value="1"/>
</dbReference>
<dbReference type="PANTHER" id="PTHR31583:SF2">
    <property type="match status" value="1"/>
</dbReference>
<dbReference type="Pfam" id="PF00270">
    <property type="entry name" value="DEAD"/>
    <property type="match status" value="1"/>
</dbReference>
<dbReference type="Pfam" id="PF00271">
    <property type="entry name" value="Helicase_C"/>
    <property type="match status" value="1"/>
</dbReference>
<dbReference type="Pfam" id="PF11603">
    <property type="entry name" value="Sir1"/>
    <property type="match status" value="1"/>
</dbReference>
<dbReference type="SMART" id="SM00487">
    <property type="entry name" value="DEXDc"/>
    <property type="match status" value="1"/>
</dbReference>
<dbReference type="SMART" id="SM00490">
    <property type="entry name" value="HELICc"/>
    <property type="match status" value="1"/>
</dbReference>
<dbReference type="SUPFAM" id="SSF144005">
    <property type="entry name" value="ORC1-binding domain"/>
    <property type="match status" value="1"/>
</dbReference>
<dbReference type="SUPFAM" id="SSF52540">
    <property type="entry name" value="P-loop containing nucleoside triphosphate hydrolases"/>
    <property type="match status" value="1"/>
</dbReference>
<dbReference type="PROSITE" id="PS51192">
    <property type="entry name" value="HELICASE_ATP_BIND_1"/>
    <property type="match status" value="1"/>
</dbReference>
<dbReference type="PROSITE" id="PS51194">
    <property type="entry name" value="HELICASE_CTER"/>
    <property type="match status" value="1"/>
</dbReference>
<accession>P53819</accession>
<accession>D6W0L0</accession>
<accession>O94144</accession>
<evidence type="ECO:0000255" key="1">
    <source>
        <dbReference type="PROSITE-ProRule" id="PRU00541"/>
    </source>
</evidence>
<evidence type="ECO:0000255" key="2">
    <source>
        <dbReference type="PROSITE-ProRule" id="PRU00542"/>
    </source>
</evidence>
<evidence type="ECO:0000256" key="3">
    <source>
        <dbReference type="SAM" id="MobiDB-lite"/>
    </source>
</evidence>
<evidence type="ECO:0000305" key="4"/>
<evidence type="ECO:0000305" key="5">
    <source>
    </source>
</evidence>
<name>YRF16_YEAST</name>
<protein>
    <recommendedName>
        <fullName>Y' element ATP-dependent helicase protein 1 copy 6</fullName>
        <ecNumber evidence="5">5.6.2.-</ecNumber>
    </recommendedName>
</protein>
<feature type="chain" id="PRO_0000102205" description="Y' element ATP-dependent helicase protein 1 copy 6">
    <location>
        <begin position="1"/>
        <end position="1859"/>
    </location>
</feature>
<feature type="domain" description="Helicase ATP-binding" evidence="1">
    <location>
        <begin position="861"/>
        <end position="1038"/>
    </location>
</feature>
<feature type="domain" description="Helicase C-terminal" evidence="2">
    <location>
        <begin position="1095"/>
        <end position="1244"/>
    </location>
</feature>
<feature type="region of interest" description="Disordered" evidence="3">
    <location>
        <begin position="1318"/>
        <end position="1485"/>
    </location>
</feature>
<feature type="compositionally biased region" description="Low complexity" evidence="3">
    <location>
        <begin position="1318"/>
        <end position="1461"/>
    </location>
</feature>
<feature type="compositionally biased region" description="Basic and acidic residues" evidence="3">
    <location>
        <begin position="1462"/>
        <end position="1485"/>
    </location>
</feature>
<feature type="binding site" evidence="1">
    <location>
        <begin position="874"/>
        <end position="881"/>
    </location>
    <ligand>
        <name>ATP</name>
        <dbReference type="ChEBI" id="CHEBI:30616"/>
    </ligand>
</feature>
<organism>
    <name type="scientific">Saccharomyces cerevisiae (strain ATCC 204508 / S288c)</name>
    <name type="common">Baker's yeast</name>
    <dbReference type="NCBI Taxonomy" id="559292"/>
    <lineage>
        <taxon>Eukaryota</taxon>
        <taxon>Fungi</taxon>
        <taxon>Dikarya</taxon>
        <taxon>Ascomycota</taxon>
        <taxon>Saccharomycotina</taxon>
        <taxon>Saccharomycetes</taxon>
        <taxon>Saccharomycetales</taxon>
        <taxon>Saccharomycetaceae</taxon>
        <taxon>Saccharomyces</taxon>
    </lineage>
</organism>